<reference key="1">
    <citation type="journal article" date="1989" name="Nucleic Acids Res.">
        <title>Nucleotide cDNA sequence coding for the PVXc coat protein.</title>
        <authorList>
            <person name="Mandel M.A."/>
            <person name="Orman B.O."/>
            <person name="Celnik R.M."/>
            <person name="Torres H.N."/>
            <person name="Mentaberry A.N."/>
        </authorList>
    </citation>
    <scope>NUCLEOTIDE SEQUENCE [GENOMIC RNA]</scope>
</reference>
<reference key="2">
    <citation type="journal article" date="2005" name="Mol. Plant Microbe Interact.">
        <title>A new cell-to-cell transport model for Potexviruses.</title>
        <authorList>
            <person name="Verchot-Lubicz J."/>
        </authorList>
    </citation>
    <scope>REVIEW</scope>
</reference>
<name>CAPSD_PVXXC</name>
<keyword id="KW-0167">Capsid protein</keyword>
<keyword id="KW-1139">Helical capsid protein</keyword>
<keyword id="KW-0687">Ribonucleoprotein</keyword>
<keyword id="KW-0946">Virion</keyword>
<dbReference type="EMBL" id="X12804">
    <property type="protein sequence ID" value="CAA31294.1"/>
    <property type="molecule type" value="Genomic_RNA"/>
</dbReference>
<dbReference type="PIR" id="S16164">
    <property type="entry name" value="S16164"/>
</dbReference>
<dbReference type="SMR" id="P10468"/>
<dbReference type="GO" id="GO:0019029">
    <property type="term" value="C:helical viral capsid"/>
    <property type="evidence" value="ECO:0007669"/>
    <property type="project" value="UniProtKB-KW"/>
</dbReference>
<dbReference type="GO" id="GO:1990904">
    <property type="term" value="C:ribonucleoprotein complex"/>
    <property type="evidence" value="ECO:0007669"/>
    <property type="project" value="UniProtKB-KW"/>
</dbReference>
<dbReference type="GO" id="GO:0005198">
    <property type="term" value="F:structural molecule activity"/>
    <property type="evidence" value="ECO:0007669"/>
    <property type="project" value="InterPro"/>
</dbReference>
<dbReference type="InterPro" id="IPR000052">
    <property type="entry name" value="Pltvir_coat"/>
</dbReference>
<dbReference type="Pfam" id="PF00286">
    <property type="entry name" value="Flexi_CP"/>
    <property type="match status" value="1"/>
</dbReference>
<dbReference type="PRINTS" id="PR00232">
    <property type="entry name" value="POTXCARLCOAT"/>
</dbReference>
<dbReference type="PROSITE" id="PS00418">
    <property type="entry name" value="POTEX_CARLAVIRUS_COAT"/>
    <property type="match status" value="1"/>
</dbReference>
<organismHost>
    <name type="scientific">Brassica campestris</name>
    <name type="common">Field mustard</name>
    <dbReference type="NCBI Taxonomy" id="3711"/>
</organismHost>
<organismHost>
    <name type="scientific">Solanum tuberosum</name>
    <name type="common">Potato</name>
    <dbReference type="NCBI Taxonomy" id="4113"/>
</organismHost>
<organism>
    <name type="scientific">Potato virus X (strain Xc)</name>
    <name type="common">PVX</name>
    <dbReference type="NCBI Taxonomy" id="12186"/>
    <lineage>
        <taxon>Viruses</taxon>
        <taxon>Riboviria</taxon>
        <taxon>Orthornavirae</taxon>
        <taxon>Kitrinoviricota</taxon>
        <taxon>Alsuviricetes</taxon>
        <taxon>Tymovirales</taxon>
        <taxon>Alphaflexiviridae</taxon>
        <taxon>Potexvirus</taxon>
        <taxon>Potato virus X</taxon>
    </lineage>
</organism>
<protein>
    <recommendedName>
        <fullName>Coat protein</fullName>
    </recommendedName>
    <alternativeName>
        <fullName>Capsid protein</fullName>
        <shortName>CP</shortName>
    </alternativeName>
</protein>
<feature type="chain" id="PRO_0000222630" description="Coat protein">
    <location>
        <begin position="1"/>
        <end position="236"/>
    </location>
</feature>
<feature type="region of interest" description="Disordered" evidence="1">
    <location>
        <begin position="1"/>
        <end position="27"/>
    </location>
</feature>
<feature type="compositionally biased region" description="Low complexity" evidence="1">
    <location>
        <begin position="7"/>
        <end position="27"/>
    </location>
</feature>
<evidence type="ECO:0000256" key="1">
    <source>
        <dbReference type="SAM" id="MobiDB-lite"/>
    </source>
</evidence>
<evidence type="ECO:0000305" key="2"/>
<accession>P10468</accession>
<comment type="function">
    <text>Required for genome encapsidation. Forms ribonucleoprotein complexes along with TGB1 helicase and viral RNA.</text>
</comment>
<comment type="subcellular location">
    <subcellularLocation>
        <location evidence="2">Virion</location>
    </subcellularLocation>
</comment>
<comment type="similarity">
    <text evidence="2">Belongs to the potexvirus capsid protein family.</text>
</comment>
<sequence>MTTPANTTQAVGSTKSTTTTTAGATPANSGLFTIPDGDFFSTAKAVVASNAVATNEDLAKIQEIWKDKKIPSDTMAQAAWDLVRHCADVGSSAQTEMIGTGPYSNGVSRARLAAAIKEVCTLRQFCKKYAPVVWNWMLTNNSPPANWQAQGFKPEHKFAAFDFFDGVTNPAAITPKEGLMRPPSEAEMNAAQTAAFVKITKARAQSNDFASLDAAVTRGRITGTTVAEAVVSLPPP</sequence>
<proteinExistence type="inferred from homology"/>